<dbReference type="EC" id="2.7.12.1" evidence="14 20 22"/>
<dbReference type="EMBL" id="CU329670">
    <property type="protein sequence ID" value="CAA90490.1"/>
    <property type="molecule type" value="Genomic_DNA"/>
</dbReference>
<dbReference type="PIR" id="S58147">
    <property type="entry name" value="S58147"/>
</dbReference>
<dbReference type="RefSeq" id="NP_592974.1">
    <property type="nucleotide sequence ID" value="NM_001018374.2"/>
</dbReference>
<dbReference type="SMR" id="Q09690"/>
<dbReference type="BioGRID" id="278379">
    <property type="interactions" value="203"/>
</dbReference>
<dbReference type="DIP" id="DIP-59764N"/>
<dbReference type="ELM" id="Q09690"/>
<dbReference type="FunCoup" id="Q09690">
    <property type="interactions" value="193"/>
</dbReference>
<dbReference type="IntAct" id="Q09690">
    <property type="interactions" value="3"/>
</dbReference>
<dbReference type="STRING" id="284812.Q09690"/>
<dbReference type="iPTMnet" id="Q09690"/>
<dbReference type="PaxDb" id="4896-SPAC2F7.03c.1"/>
<dbReference type="EnsemblFungi" id="SPAC2F7.03c.1">
    <property type="protein sequence ID" value="SPAC2F7.03c.1:pep"/>
    <property type="gene ID" value="SPAC2F7.03c"/>
</dbReference>
<dbReference type="GeneID" id="2541889"/>
<dbReference type="KEGG" id="spo:2541889"/>
<dbReference type="PomBase" id="SPAC2F7.03c">
    <property type="gene designation" value="pom1"/>
</dbReference>
<dbReference type="VEuPathDB" id="FungiDB:SPAC2F7.03c"/>
<dbReference type="eggNOG" id="KOG0667">
    <property type="taxonomic scope" value="Eukaryota"/>
</dbReference>
<dbReference type="HOGENOM" id="CLU_009940_0_0_1"/>
<dbReference type="InParanoid" id="Q09690"/>
<dbReference type="OMA" id="DDRFPNW"/>
<dbReference type="PhylomeDB" id="Q09690"/>
<dbReference type="Reactome" id="R-SPO-6804756">
    <property type="pathway name" value="Regulation of TP53 Activity through Phosphorylation"/>
</dbReference>
<dbReference type="PRO" id="PR:Q09690"/>
<dbReference type="Proteomes" id="UP000002485">
    <property type="component" value="Chromosome I"/>
</dbReference>
<dbReference type="GO" id="GO:0051285">
    <property type="term" value="C:cell cortex of cell tip"/>
    <property type="evidence" value="ECO:0000314"/>
    <property type="project" value="PomBase"/>
</dbReference>
<dbReference type="GO" id="GO:0032153">
    <property type="term" value="C:cell division site"/>
    <property type="evidence" value="ECO:0000314"/>
    <property type="project" value="PomBase"/>
</dbReference>
<dbReference type="GO" id="GO:0051286">
    <property type="term" value="C:cell tip"/>
    <property type="evidence" value="ECO:0000314"/>
    <property type="project" value="PomBase"/>
</dbReference>
<dbReference type="GO" id="GO:0005737">
    <property type="term" value="C:cytoplasm"/>
    <property type="evidence" value="ECO:0000318"/>
    <property type="project" value="GO_Central"/>
</dbReference>
<dbReference type="GO" id="GO:0106186">
    <property type="term" value="C:cytoplasmic side of plasma membrane, cell tip"/>
    <property type="evidence" value="ECO:0000269"/>
    <property type="project" value="PomBase"/>
</dbReference>
<dbReference type="GO" id="GO:0005856">
    <property type="term" value="C:cytoskeleton"/>
    <property type="evidence" value="ECO:0000318"/>
    <property type="project" value="GO_Central"/>
</dbReference>
<dbReference type="GO" id="GO:0097575">
    <property type="term" value="C:lateral cell cortex"/>
    <property type="evidence" value="ECO:0000314"/>
    <property type="project" value="PomBase"/>
</dbReference>
<dbReference type="GO" id="GO:0120105">
    <property type="term" value="C:mitotic actomyosin contractile ring, intermediate layer"/>
    <property type="evidence" value="ECO:0000314"/>
    <property type="project" value="PomBase"/>
</dbReference>
<dbReference type="GO" id="GO:0005886">
    <property type="term" value="C:plasma membrane"/>
    <property type="evidence" value="ECO:0000269"/>
    <property type="project" value="PomBase"/>
</dbReference>
<dbReference type="GO" id="GO:0030427">
    <property type="term" value="C:site of polarized growth"/>
    <property type="evidence" value="ECO:0000314"/>
    <property type="project" value="PomBase"/>
</dbReference>
<dbReference type="GO" id="GO:0005524">
    <property type="term" value="F:ATP binding"/>
    <property type="evidence" value="ECO:0000255"/>
    <property type="project" value="PomBase"/>
</dbReference>
<dbReference type="GO" id="GO:1901981">
    <property type="term" value="F:phosphatidylinositol phosphate binding"/>
    <property type="evidence" value="ECO:0000314"/>
    <property type="project" value="PomBase"/>
</dbReference>
<dbReference type="GO" id="GO:0106310">
    <property type="term" value="F:protein serine kinase activity"/>
    <property type="evidence" value="ECO:0007669"/>
    <property type="project" value="RHEA"/>
</dbReference>
<dbReference type="GO" id="GO:0004674">
    <property type="term" value="F:protein serine/threonine kinase activity"/>
    <property type="evidence" value="ECO:0000314"/>
    <property type="project" value="PomBase"/>
</dbReference>
<dbReference type="GO" id="GO:0004712">
    <property type="term" value="F:protein serine/threonine/tyrosine kinase activity"/>
    <property type="evidence" value="ECO:0007669"/>
    <property type="project" value="UniProtKB-EC"/>
</dbReference>
<dbReference type="GO" id="GO:0004713">
    <property type="term" value="F:protein tyrosine kinase activity"/>
    <property type="evidence" value="ECO:0007669"/>
    <property type="project" value="RHEA"/>
</dbReference>
<dbReference type="GO" id="GO:0051519">
    <property type="term" value="P:activation of bipolar cell growth"/>
    <property type="evidence" value="ECO:0000315"/>
    <property type="project" value="PomBase"/>
</dbReference>
<dbReference type="GO" id="GO:0030950">
    <property type="term" value="P:establishment or maintenance of actin cytoskeleton polarity"/>
    <property type="evidence" value="ECO:0000315"/>
    <property type="project" value="PomBase"/>
</dbReference>
<dbReference type="GO" id="GO:0061245">
    <property type="term" value="P:establishment or maintenance of bipolar cell polarity"/>
    <property type="evidence" value="ECO:0000316"/>
    <property type="project" value="PomBase"/>
</dbReference>
<dbReference type="GO" id="GO:0031569">
    <property type="term" value="P:mitotic G2 cell size control checkpoint signaling"/>
    <property type="evidence" value="ECO:0000315"/>
    <property type="project" value="PomBase"/>
</dbReference>
<dbReference type="GO" id="GO:1903138">
    <property type="term" value="P:negative regulation of cell integrity MAPK cascade"/>
    <property type="evidence" value="ECO:0000315"/>
    <property type="project" value="PomBase"/>
</dbReference>
<dbReference type="GO" id="GO:0010972">
    <property type="term" value="P:negative regulation of G2/M transition of mitotic cell cycle"/>
    <property type="evidence" value="ECO:0000315"/>
    <property type="project" value="PomBase"/>
</dbReference>
<dbReference type="GO" id="GO:1903067">
    <property type="term" value="P:negative regulation of protein localization to cell tip"/>
    <property type="evidence" value="ECO:0000315"/>
    <property type="project" value="PomBase"/>
</dbReference>
<dbReference type="GO" id="GO:1903077">
    <property type="term" value="P:negative regulation of protein localization to plasma membrane"/>
    <property type="evidence" value="ECO:0000314"/>
    <property type="project" value="PomBase"/>
</dbReference>
<dbReference type="GO" id="GO:1903617">
    <property type="term" value="P:positive regulation of mitotic cytokinesis, division site positioning"/>
    <property type="evidence" value="ECO:0000315"/>
    <property type="project" value="PomBase"/>
</dbReference>
<dbReference type="GO" id="GO:0032956">
    <property type="term" value="P:regulation of actin cytoskeleton organization"/>
    <property type="evidence" value="ECO:0000315"/>
    <property type="project" value="PomBase"/>
</dbReference>
<dbReference type="GO" id="GO:0032878">
    <property type="term" value="P:regulation of establishment or maintenance of cell polarity"/>
    <property type="evidence" value="ECO:0000315"/>
    <property type="project" value="PomBase"/>
</dbReference>
<dbReference type="CDD" id="cd14210">
    <property type="entry name" value="PKc_DYRK"/>
    <property type="match status" value="1"/>
</dbReference>
<dbReference type="FunFam" id="1.10.510.10:FF:000380">
    <property type="entry name" value="Serine/threonine-protein kinase ppk15"/>
    <property type="match status" value="1"/>
</dbReference>
<dbReference type="Gene3D" id="3.30.10.30">
    <property type="entry name" value="DYRK"/>
    <property type="match status" value="1"/>
</dbReference>
<dbReference type="Gene3D" id="3.30.200.20">
    <property type="entry name" value="Phosphorylase Kinase, domain 1"/>
    <property type="match status" value="1"/>
</dbReference>
<dbReference type="Gene3D" id="1.10.510.10">
    <property type="entry name" value="Transferase(Phosphotransferase) domain 1"/>
    <property type="match status" value="1"/>
</dbReference>
<dbReference type="InterPro" id="IPR042521">
    <property type="entry name" value="DYRK"/>
</dbReference>
<dbReference type="InterPro" id="IPR011009">
    <property type="entry name" value="Kinase-like_dom_sf"/>
</dbReference>
<dbReference type="InterPro" id="IPR000719">
    <property type="entry name" value="Prot_kinase_dom"/>
</dbReference>
<dbReference type="InterPro" id="IPR017441">
    <property type="entry name" value="Protein_kinase_ATP_BS"/>
</dbReference>
<dbReference type="InterPro" id="IPR008271">
    <property type="entry name" value="Ser/Thr_kinase_AS"/>
</dbReference>
<dbReference type="InterPro" id="IPR050494">
    <property type="entry name" value="Ser_Thr_dual-spec_kinase"/>
</dbReference>
<dbReference type="PANTHER" id="PTHR24058">
    <property type="entry name" value="DUAL SPECIFICITY PROTEIN KINASE"/>
    <property type="match status" value="1"/>
</dbReference>
<dbReference type="PANTHER" id="PTHR24058:SF132">
    <property type="entry name" value="DYRK-FAMILY KINASE POM1"/>
    <property type="match status" value="1"/>
</dbReference>
<dbReference type="Pfam" id="PF00069">
    <property type="entry name" value="Pkinase"/>
    <property type="match status" value="1"/>
</dbReference>
<dbReference type="SMART" id="SM00220">
    <property type="entry name" value="S_TKc"/>
    <property type="match status" value="1"/>
</dbReference>
<dbReference type="SUPFAM" id="SSF56112">
    <property type="entry name" value="Protein kinase-like (PK-like)"/>
    <property type="match status" value="1"/>
</dbReference>
<dbReference type="PROSITE" id="PS00107">
    <property type="entry name" value="PROTEIN_KINASE_ATP"/>
    <property type="match status" value="1"/>
</dbReference>
<dbReference type="PROSITE" id="PS50011">
    <property type="entry name" value="PROTEIN_KINASE_DOM"/>
    <property type="match status" value="1"/>
</dbReference>
<dbReference type="PROSITE" id="PS00108">
    <property type="entry name" value="PROTEIN_KINASE_ST"/>
    <property type="match status" value="1"/>
</dbReference>
<sequence>MGYLQSQKAVSLGDENTDALFKLHTSNRKSANMFGIKSELLNPSELSAVGSYSNDICPNRQSSSSTAADTSPSTNASNTNISFPEQEHKDELFMNVEPKGVGSSMDNHAITIHHSTGNGLLRSSFDHDYRQKNSPRNSIHRLSNISIGNNPIDFESSQQNNPSSLNTSSHHRTSSISNSKSFGTSLSYYNRSSKPSDWNQQNNGGHLSGVISITQDVSSVPLQSSVFSSGNHAYHASMAPKRSGSWRHTNFHSTSHPRAASIGNKSGIPPVPTIPPNIGHSTDHQHPKANISGSLTKSSSESKNLSTIQSPLKTSNSFFKELSPHSQITLSNVKNNHSHVGSQTKSHSFATPSVFDNNKPVSSDNHNNTTTSSQVHPDSRNPDPKAAPKAVSQKTNVDGHRNHEAKHGNTVQNESKSQKSSNKEGRSSRGGFFSRLSFSRSSSRMKKGSKAKHEDAPDVPAIPHAYIADSSTKSSYRNGKKTPTRTKSRMQQFINWFKPSKERSSNGNSDSASPPPVPRLSITRSQVSREPEKPEEIPSVPPLPSNFKDKGHVPQQRSVSYTPKRSSDTSESLQPSLSFASSNVLSEPFDRKVADLAMKAINSKRINKLLDDAKVMQSLLDRACIITPVRNTEVQLINTAPLTEYEQDEINNYDNIYFTGLRNVDKRRSADENTSSNFGFDDERGDYKVVLGDHIAYRYEVVDFLGKGSFGQVLRCIDYETGKLVALKIIRNKKRFHMQALVETKILQKIREWDPLDEYCMVQYTDHFYFRDHLCVATELLGKNLYELIKSNGFKGLPIVVIKSITRQLIQCLTLLNEKHVIHCDLKPENILLCHPFKSQVKVIDFGSSCFEGECVYTYIQSRFYRSPEVILGMGYGTPIDVWSLGCIIAEMYTGFPLFPGENEQEQLACIMEIFGPPDHSLIDKCSRKKVFFDSSGKPRPFVSSKGVSRRPFSKSLHQVLQCKDVSFLSFISDCLKWDPDERMTPQQAAQHDFLTGKQDVRRPNTAPARQKFARPPNIETAPIPRPLPNLPMEYNDHTLPSPKEPSNQASNLVRSSDKFPNLLTNLDYSIISDNGFLRKPVEKSRP</sequence>
<gene>
    <name evidence="25" type="primary">pom1</name>
    <name type="ORF">SPAC2F7.03c</name>
</gene>
<accession>Q09690</accession>
<keyword id="KW-0067">ATP-binding</keyword>
<keyword id="KW-1003">Cell membrane</keyword>
<keyword id="KW-0418">Kinase</keyword>
<keyword id="KW-0472">Membrane</keyword>
<keyword id="KW-0547">Nucleotide-binding</keyword>
<keyword id="KW-0597">Phosphoprotein</keyword>
<keyword id="KW-1185">Reference proteome</keyword>
<keyword id="KW-0723">Serine/threonine-protein kinase</keyword>
<keyword id="KW-0808">Transferase</keyword>
<name>POM1_SCHPO</name>
<comment type="function">
    <text evidence="4 5 6 7 8 9 10 12 13 14 15 17 18 19 20 21 22 24">Polarity factor involved in localization of polarized growth and cytokinesis (PubMed:11230130, PubMed:11950884, PubMed:14663827, PubMed:17077120). Forms an intracellular gradient that serves to measure cell length and control mitotic entry (PubMed:19474789, PubMed:19474792, PubMed:21703453, PubMed:24047646). Controls the timing of mitotic commitment by regulating the inhibitory impact of cdr1/cdr2 on wee1 activity (PubMed:19474792, PubMed:22684255, PubMed:24316795). Directly phosphorylates the tail of cdr2 which inhibits cdr2 activation by ssp1 (PubMed:19474792, PubMed:24508166). Cdr2 phosphorylation by pom1 also modulates cdr2 association with membranes and inhibits cdr2 interaction with mid1, reducing its clustering ability, possibly via the down-regulation of cdr2 kinase activity (PubMed:24982431). Acts as a negative regulator of mid1 distribution, excluding mid1 from non-growing ends, which prevents division-septum assembly at the cell ends (PubMed:17077120, PubMed:17140794, PubMed:17543869). The pom1 polar gradient also mediates mitotic entry by regulating cdk1 (PubMed:19474789). Plays an essential role in proper localization and phosphorylation of a GAP for cdc42, rga4, which ensures bipolar localization of GTP-bound, active cdc42 involved in F-actin formation (PubMed:18328707). Phosphorylates multiple other substrates that function in polarized cell growth, including tea4, mod5, pal1, the Rho GAP rga7, and the Arf GEF syt22 (PubMed:25720772).</text>
</comment>
<comment type="catalytic activity">
    <reaction evidence="14 20 22">
        <text>L-seryl-[protein] + ATP = O-phospho-L-seryl-[protein] + ADP + H(+)</text>
        <dbReference type="Rhea" id="RHEA:17989"/>
        <dbReference type="Rhea" id="RHEA-COMP:9863"/>
        <dbReference type="Rhea" id="RHEA-COMP:11604"/>
        <dbReference type="ChEBI" id="CHEBI:15378"/>
        <dbReference type="ChEBI" id="CHEBI:29999"/>
        <dbReference type="ChEBI" id="CHEBI:30616"/>
        <dbReference type="ChEBI" id="CHEBI:83421"/>
        <dbReference type="ChEBI" id="CHEBI:456216"/>
        <dbReference type="EC" id="2.7.12.1"/>
    </reaction>
</comment>
<comment type="catalytic activity">
    <reaction evidence="14 20 22">
        <text>L-threonyl-[protein] + ATP = O-phospho-L-threonyl-[protein] + ADP + H(+)</text>
        <dbReference type="Rhea" id="RHEA:46608"/>
        <dbReference type="Rhea" id="RHEA-COMP:11060"/>
        <dbReference type="Rhea" id="RHEA-COMP:11605"/>
        <dbReference type="ChEBI" id="CHEBI:15378"/>
        <dbReference type="ChEBI" id="CHEBI:30013"/>
        <dbReference type="ChEBI" id="CHEBI:30616"/>
        <dbReference type="ChEBI" id="CHEBI:61977"/>
        <dbReference type="ChEBI" id="CHEBI:456216"/>
        <dbReference type="EC" id="2.7.12.1"/>
    </reaction>
</comment>
<comment type="catalytic activity">
    <reaction evidence="14 20 22">
        <text>L-tyrosyl-[protein] + ATP = O-phospho-L-tyrosyl-[protein] + ADP + H(+)</text>
        <dbReference type="Rhea" id="RHEA:10596"/>
        <dbReference type="Rhea" id="RHEA-COMP:10136"/>
        <dbReference type="Rhea" id="RHEA-COMP:20101"/>
        <dbReference type="ChEBI" id="CHEBI:15378"/>
        <dbReference type="ChEBI" id="CHEBI:30616"/>
        <dbReference type="ChEBI" id="CHEBI:46858"/>
        <dbReference type="ChEBI" id="CHEBI:61978"/>
        <dbReference type="ChEBI" id="CHEBI:456216"/>
        <dbReference type="EC" id="2.7.12.1"/>
    </reaction>
</comment>
<comment type="subunit">
    <text evidence="12 15">Interacts with rga4 (PubMed:18328707). Interacts with tea4; this interaction triggers pom1 plasma membrane association (PubMed:21703453).</text>
</comment>
<comment type="interaction">
    <interactant intactId="EBI-4319163">
        <id>Q09690</id>
    </interactant>
    <interactant intactId="EBI-4319869">
        <id>P87050</id>
        <label>cdr2</label>
    </interactant>
    <organismsDiffer>false</organismsDiffer>
    <experiments>2</experiments>
</comment>
<comment type="interaction">
    <interactant intactId="EBI-4319163">
        <id>Q09690</id>
    </interactant>
    <interactant intactId="EBI-1099982">
        <id>O60132</id>
        <label>tea4</label>
    </interactant>
    <organismsDiffer>false</organismsDiffer>
    <experiments>5</experiments>
</comment>
<comment type="subcellular location">
    <subcellularLocation>
        <location evidence="4 5 6">Cell tip</location>
    </subcellularLocation>
    <subcellularLocation>
        <location evidence="15">Cell membrane</location>
        <topology evidence="15">Peripheral membrane protein</topology>
    </subcellularLocation>
    <text evidence="6 13 14 15 16 23">Forms an intracellular gradient that serves to measure cell length and control mitotic entry (PubMed:19474789, PubMed:19474792, PubMed:21703453, PubMed:22342545, PubMed:26150232). Localized to the cell division site at the time of cytokinesis (PubMed:14663827). Tea4 recruits pom1 to the cell cortex from where it then moves laterally at the plasma membrane, which it binds through a basic region exhibiting direct lipid interaction (PubMed:21703453). Pom1 autophosphorylates in this region to lower lipid affinity and promote membrane release (PubMed:21703453). Tea4 triggers pom1 plasma membrane association by promoting its dephosphorylation through the protein phosphatase dis2 (PubMed:21703453).</text>
</comment>
<comment type="PTM">
    <text evidence="15 23">Autophosphorylates at the cell cortex to lower lipid affinity and promote membrane release (PubMed:21703453, PubMed:26150232). Dephosphorylation by dis2, regulated by tea4, triggers membrane association (PubMed:21703453).</text>
</comment>
<comment type="similarity">
    <text evidence="26">Belongs to the protein kinase superfamily. CMGC Ser/Thr protein kinase family. MNB/DYRK subfamily.</text>
</comment>
<feature type="chain" id="PRO_0000086579" description="DYRK-family kinase pom1">
    <location>
        <begin position="1"/>
        <end position="1087"/>
    </location>
</feature>
<feature type="domain" description="Protein kinase" evidence="1">
    <location>
        <begin position="699"/>
        <end position="995"/>
    </location>
</feature>
<feature type="region of interest" description="Disordered" evidence="3">
    <location>
        <begin position="57"/>
        <end position="81"/>
    </location>
</feature>
<feature type="region of interest" description="Disordered" evidence="3">
    <location>
        <begin position="120"/>
        <end position="182"/>
    </location>
</feature>
<feature type="region of interest" description="Disordered" evidence="3">
    <location>
        <begin position="238"/>
        <end position="308"/>
    </location>
</feature>
<feature type="region of interest" description="Disordered" evidence="3">
    <location>
        <begin position="336"/>
        <end position="578"/>
    </location>
</feature>
<feature type="region of interest" description="Disordered" evidence="3">
    <location>
        <begin position="992"/>
        <end position="1011"/>
    </location>
</feature>
<feature type="region of interest" description="Disordered" evidence="3">
    <location>
        <begin position="1017"/>
        <end position="1056"/>
    </location>
</feature>
<feature type="compositionally biased region" description="Low complexity" evidence="3">
    <location>
        <begin position="62"/>
        <end position="81"/>
    </location>
</feature>
<feature type="compositionally biased region" description="Polar residues" evidence="3">
    <location>
        <begin position="132"/>
        <end position="165"/>
    </location>
</feature>
<feature type="compositionally biased region" description="Polar residues" evidence="3">
    <location>
        <begin position="246"/>
        <end position="256"/>
    </location>
</feature>
<feature type="compositionally biased region" description="Low complexity" evidence="3">
    <location>
        <begin position="292"/>
        <end position="307"/>
    </location>
</feature>
<feature type="compositionally biased region" description="Polar residues" evidence="3">
    <location>
        <begin position="336"/>
        <end position="361"/>
    </location>
</feature>
<feature type="compositionally biased region" description="Low complexity" evidence="3">
    <location>
        <begin position="362"/>
        <end position="373"/>
    </location>
</feature>
<feature type="compositionally biased region" description="Basic and acidic residues" evidence="3">
    <location>
        <begin position="397"/>
        <end position="407"/>
    </location>
</feature>
<feature type="compositionally biased region" description="Low complexity" evidence="3">
    <location>
        <begin position="429"/>
        <end position="442"/>
    </location>
</feature>
<feature type="compositionally biased region" description="Basic residues" evidence="3">
    <location>
        <begin position="478"/>
        <end position="488"/>
    </location>
</feature>
<feature type="compositionally biased region" description="Basic and acidic residues" evidence="3">
    <location>
        <begin position="527"/>
        <end position="536"/>
    </location>
</feature>
<feature type="compositionally biased region" description="Polar residues" evidence="3">
    <location>
        <begin position="555"/>
        <end position="578"/>
    </location>
</feature>
<feature type="compositionally biased region" description="Polar residues" evidence="3">
    <location>
        <begin position="1045"/>
        <end position="1055"/>
    </location>
</feature>
<feature type="active site" description="Proton acceptor" evidence="1 2">
    <location>
        <position position="825"/>
    </location>
</feature>
<feature type="binding site" evidence="1">
    <location>
        <begin position="705"/>
        <end position="713"/>
    </location>
    <ligand>
        <name>ATP</name>
        <dbReference type="ChEBI" id="CHEBI:30616"/>
    </ligand>
</feature>
<feature type="binding site" evidence="1">
    <location>
        <position position="728"/>
    </location>
    <ligand>
        <name>ATP</name>
        <dbReference type="ChEBI" id="CHEBI:30616"/>
    </ligand>
</feature>
<feature type="modified residue" description="Phosphoserine" evidence="11">
    <location>
        <position position="513"/>
    </location>
</feature>
<reference key="1">
    <citation type="journal article" date="2002" name="Nature">
        <title>The genome sequence of Schizosaccharomyces pombe.</title>
        <authorList>
            <person name="Wood V."/>
            <person name="Gwilliam R."/>
            <person name="Rajandream M.A."/>
            <person name="Lyne M.H."/>
            <person name="Lyne R."/>
            <person name="Stewart A."/>
            <person name="Sgouros J.G."/>
            <person name="Peat N."/>
            <person name="Hayles J."/>
            <person name="Baker S.G."/>
            <person name="Basham D."/>
            <person name="Bowman S."/>
            <person name="Brooks K."/>
            <person name="Brown D."/>
            <person name="Brown S."/>
            <person name="Chillingworth T."/>
            <person name="Churcher C.M."/>
            <person name="Collins M."/>
            <person name="Connor R."/>
            <person name="Cronin A."/>
            <person name="Davis P."/>
            <person name="Feltwell T."/>
            <person name="Fraser A."/>
            <person name="Gentles S."/>
            <person name="Goble A."/>
            <person name="Hamlin N."/>
            <person name="Harris D.E."/>
            <person name="Hidalgo J."/>
            <person name="Hodgson G."/>
            <person name="Holroyd S."/>
            <person name="Hornsby T."/>
            <person name="Howarth S."/>
            <person name="Huckle E.J."/>
            <person name="Hunt S."/>
            <person name="Jagels K."/>
            <person name="James K.D."/>
            <person name="Jones L."/>
            <person name="Jones M."/>
            <person name="Leather S."/>
            <person name="McDonald S."/>
            <person name="McLean J."/>
            <person name="Mooney P."/>
            <person name="Moule S."/>
            <person name="Mungall K.L."/>
            <person name="Murphy L.D."/>
            <person name="Niblett D."/>
            <person name="Odell C."/>
            <person name="Oliver K."/>
            <person name="O'Neil S."/>
            <person name="Pearson D."/>
            <person name="Quail M.A."/>
            <person name="Rabbinowitsch E."/>
            <person name="Rutherford K.M."/>
            <person name="Rutter S."/>
            <person name="Saunders D."/>
            <person name="Seeger K."/>
            <person name="Sharp S."/>
            <person name="Skelton J."/>
            <person name="Simmonds M.N."/>
            <person name="Squares R."/>
            <person name="Squares S."/>
            <person name="Stevens K."/>
            <person name="Taylor K."/>
            <person name="Taylor R.G."/>
            <person name="Tivey A."/>
            <person name="Walsh S.V."/>
            <person name="Warren T."/>
            <person name="Whitehead S."/>
            <person name="Woodward J.R."/>
            <person name="Volckaert G."/>
            <person name="Aert R."/>
            <person name="Robben J."/>
            <person name="Grymonprez B."/>
            <person name="Weltjens I."/>
            <person name="Vanstreels E."/>
            <person name="Rieger M."/>
            <person name="Schaefer M."/>
            <person name="Mueller-Auer S."/>
            <person name="Gabel C."/>
            <person name="Fuchs M."/>
            <person name="Duesterhoeft A."/>
            <person name="Fritzc C."/>
            <person name="Holzer E."/>
            <person name="Moestl D."/>
            <person name="Hilbert H."/>
            <person name="Borzym K."/>
            <person name="Langer I."/>
            <person name="Beck A."/>
            <person name="Lehrach H."/>
            <person name="Reinhardt R."/>
            <person name="Pohl T.M."/>
            <person name="Eger P."/>
            <person name="Zimmermann W."/>
            <person name="Wedler H."/>
            <person name="Wambutt R."/>
            <person name="Purnelle B."/>
            <person name="Goffeau A."/>
            <person name="Cadieu E."/>
            <person name="Dreano S."/>
            <person name="Gloux S."/>
            <person name="Lelaure V."/>
            <person name="Mottier S."/>
            <person name="Galibert F."/>
            <person name="Aves S.J."/>
            <person name="Xiang Z."/>
            <person name="Hunt C."/>
            <person name="Moore K."/>
            <person name="Hurst S.M."/>
            <person name="Lucas M."/>
            <person name="Rochet M."/>
            <person name="Gaillardin C."/>
            <person name="Tallada V.A."/>
            <person name="Garzon A."/>
            <person name="Thode G."/>
            <person name="Daga R.R."/>
            <person name="Cruzado L."/>
            <person name="Jimenez J."/>
            <person name="Sanchez M."/>
            <person name="del Rey F."/>
            <person name="Benito J."/>
            <person name="Dominguez A."/>
            <person name="Revuelta J.L."/>
            <person name="Moreno S."/>
            <person name="Armstrong J."/>
            <person name="Forsburg S.L."/>
            <person name="Cerutti L."/>
            <person name="Lowe T."/>
            <person name="McCombie W.R."/>
            <person name="Paulsen I."/>
            <person name="Potashkin J."/>
            <person name="Shpakovski G.V."/>
            <person name="Ussery D."/>
            <person name="Barrell B.G."/>
            <person name="Nurse P."/>
        </authorList>
    </citation>
    <scope>NUCLEOTIDE SEQUENCE [LARGE SCALE GENOMIC DNA]</scope>
    <source>
        <strain>972 / ATCC 24843</strain>
    </source>
</reference>
<reference key="2">
    <citation type="journal article" date="1998" name="Genes Dev.">
        <title>Pom1p, a fission yeast protein kinase that provides positional information for both polarized growth and cytokinesis.</title>
        <authorList>
            <person name="Baehler J."/>
            <person name="Pringle J.R."/>
        </authorList>
    </citation>
    <scope>FUNCTION</scope>
    <source>
        <strain>972 / ATCC 24843</strain>
    </source>
</reference>
<reference key="3">
    <citation type="journal article" date="2001" name="EMBO J.">
        <title>Fission yeast Pom1p kinase activity is cell cycle regulated and essential for cellular symmetry during growth and division.</title>
        <authorList>
            <person name="Baehler J."/>
            <person name="Nurse P."/>
        </authorList>
    </citation>
    <scope>FUNCTION</scope>
    <scope>SUBCELLULAR LOCATION</scope>
</reference>
<reference key="4">
    <citation type="journal article" date="2002" name="J. Cell Sci.">
        <title>Different mechanisms of cell polarisation in vegetative and shmooing growth in fission yeast.</title>
        <authorList>
            <person name="Niccoli T."/>
            <person name="Nurse P."/>
        </authorList>
    </citation>
    <scope>FUNCTION</scope>
    <scope>SUBCELLULAR LOCATION</scope>
</reference>
<reference key="5">
    <citation type="journal article" date="2003" name="Yeast">
        <title>Role of Tea1p, Tea3p and Pom1p in the determination of cell ends in Schizosaccharomyces pombe.</title>
        <authorList>
            <person name="Niccoli T."/>
            <person name="Arellano M."/>
            <person name="Nurse P."/>
        </authorList>
    </citation>
    <scope>FUNCTION</scope>
    <scope>SUBCELLULAR LOCATION</scope>
</reference>
<reference key="6">
    <citation type="journal article" date="2006" name="Curr. Biol.">
        <title>The cell-end factor pom1p inhibits mid1p in specification of the cell division plane in fission yeast.</title>
        <authorList>
            <person name="Padte N.N."/>
            <person name="Martin S.G."/>
            <person name="Howard M."/>
            <person name="Chang F."/>
        </authorList>
    </citation>
    <scope>FUNCTION</scope>
</reference>
<reference key="7">
    <citation type="journal article" date="2006" name="Curr. Genet.">
        <title>Spatial regulation of cytokinesis by the Kin1 and Pom1 kinases in fission yeast.</title>
        <authorList>
            <person name="La Carbona S."/>
            <person name="Le Goff X."/>
        </authorList>
    </citation>
    <scope>FUNCTION</scope>
</reference>
<reference key="8">
    <citation type="journal article" date="2006" name="J. Cell Sci.">
        <title>Pom1 kinase links division plane position to cell polarity by regulating Mid1p cortical distribution.</title>
        <authorList>
            <person name="Celton-Morizur S."/>
            <person name="Racine V."/>
            <person name="Sibarita J.B."/>
            <person name="Paoletti A."/>
        </authorList>
    </citation>
    <scope>FUNCTION</scope>
</reference>
<reference key="9">
    <citation type="journal article" date="2007" name="Dev. Cell">
        <title>Polarity determinants Tea1p, Tea4p, and Pom1p inhibit division-septum assembly at cell ends in fission yeast.</title>
        <authorList>
            <person name="Huang Y."/>
            <person name="Chew T.G."/>
            <person name="Ge W."/>
            <person name="Balasubramanian M.K."/>
        </authorList>
    </citation>
    <scope>FUNCTION</scope>
</reference>
<reference key="10">
    <citation type="journal article" date="2008" name="Curr. Biol.">
        <title>Pom1 DYRK regulates localization of the Rga4 GAP to ensure bipolar activation of Cdc42 in fission yeast.</title>
        <authorList>
            <person name="Tatebe H."/>
            <person name="Nakano K."/>
            <person name="Maximo R."/>
            <person name="Shiozaki K."/>
        </authorList>
    </citation>
    <scope>FUNCTION</scope>
    <scope>INTERACTION WITH RGA4</scope>
</reference>
<reference key="11">
    <citation type="journal article" date="2008" name="J. Proteome Res.">
        <title>Phosphoproteome analysis of fission yeast.</title>
        <authorList>
            <person name="Wilson-Grady J.T."/>
            <person name="Villen J."/>
            <person name="Gygi S.P."/>
        </authorList>
    </citation>
    <scope>PHOSPHORYLATION [LARGE SCALE ANALYSIS] AT SER-513</scope>
    <scope>IDENTIFICATION BY MASS SPECTROMETRY</scope>
</reference>
<reference key="12">
    <citation type="journal article" date="2009" name="Nature">
        <title>Polar gradients of the DYRK-family kinase Pom1 couple cell length with the cell cycle.</title>
        <authorList>
            <person name="Martin S.G."/>
            <person name="Berthelot-Grosjean M."/>
        </authorList>
    </citation>
    <scope>FUNCTION</scope>
    <scope>CATALYTIC ACTIVITY</scope>
    <scope>SUBCELLULAR LOCATION</scope>
</reference>
<reference key="13">
    <citation type="journal article" date="2009" name="Nature">
        <title>A spatial gradient coordinates cell size and mitotic entry in fission yeast.</title>
        <authorList>
            <person name="Moseley J.B."/>
            <person name="Mayeux A."/>
            <person name="Paoletti A."/>
            <person name="Nurse P."/>
        </authorList>
    </citation>
    <scope>FUNCTION</scope>
    <scope>SUBCELLULAR LOCATION</scope>
</reference>
<reference key="14">
    <citation type="journal article" date="2011" name="Cell">
        <title>A phosphorylation cycle shapes gradients of the DYRK family kinase Pom1 at the plasma membrane.</title>
        <authorList>
            <person name="Hachet O."/>
            <person name="Berthelot-Grosjean M."/>
            <person name="Kokkoris K."/>
            <person name="Vincenzetti V."/>
            <person name="Moosbrugger J."/>
            <person name="Martin S.G."/>
        </authorList>
    </citation>
    <scope>FUNCTION</scope>
    <scope>SUBCELLULAR LOCATION</scope>
    <scope>PHOSPHORYLATION</scope>
    <scope>INTERACTION WITH TEA4</scope>
</reference>
<reference key="15">
    <citation type="journal article" date="2012" name="Dev. Cell">
        <title>Noise reduction in the intracellular pom1p gradient by a dynamic clustering mechanism.</title>
        <authorList>
            <person name="Saunders T.E."/>
            <person name="Pan K.Z."/>
            <person name="Angel A."/>
            <person name="Guan Y."/>
            <person name="Shah J.V."/>
            <person name="Howard M."/>
            <person name="Chang F."/>
        </authorList>
    </citation>
    <scope>SUBCELLULAR LOCATION</scope>
</reference>
<reference key="16">
    <citation type="journal article" date="2012" name="Nat. Cell Biol.">
        <title>The S. pombe cytokinesis NDR kinase Sid2 activates Fin1 NIMA kinase to control mitotic commitment through Pom1/Wee1.</title>
        <authorList>
            <person name="Grallert A."/>
            <person name="Connolly Y."/>
            <person name="Smith D.L."/>
            <person name="Simanis V."/>
            <person name="Hagan I.M."/>
        </authorList>
    </citation>
    <scope>FUNCTION</scope>
</reference>
<reference key="17">
    <citation type="journal article" date="2013" name="Cell Cycle">
        <title>Pom1 and cell size homeostasis in fission yeast.</title>
        <authorList>
            <person name="Wood E."/>
            <person name="Nurse P."/>
        </authorList>
    </citation>
    <scope>FUNCTION</scope>
</reference>
<reference key="18">
    <citation type="journal article" date="2014" name="Cell Cycle">
        <title>Distinct levels in Pom1 gradients limit Cdr2 activity and localization to time and position division.</title>
        <authorList>
            <person name="Bhatia P."/>
            <person name="Hachet O."/>
            <person name="Hersch M."/>
            <person name="Rincon S.A."/>
            <person name="Berthelot-Grosjean M."/>
            <person name="Dalessi S."/>
            <person name="Basterra L."/>
            <person name="Bergmann S."/>
            <person name="Paoletti A."/>
            <person name="Martin S.G."/>
        </authorList>
    </citation>
    <scope>FUNCTION</scope>
    <scope>SUBCELLULAR LOCATION</scope>
</reference>
<reference key="19">
    <citation type="journal article" date="2014" name="Curr. Biol.">
        <title>Dueling kinases regulate cell size at division through the SAD kinase Cdr2.</title>
        <authorList>
            <person name="Deng L."/>
            <person name="Baldissard S."/>
            <person name="Kettenbach A.N."/>
            <person name="Gerber S.A."/>
            <person name="Moseley J.B."/>
        </authorList>
    </citation>
    <scope>FUNCTION</scope>
    <scope>CATALYTIC ACTIVITY</scope>
</reference>
<reference key="20">
    <citation type="journal article" date="2014" name="J. Cell Biol.">
        <title>Pom1 regulates the assembly of Cdr2-Mid1 cortical nodes for robust spatial control of cytokinesis.</title>
        <authorList>
            <person name="Rincon S.A."/>
            <person name="Bhatia P."/>
            <person name="Bicho C."/>
            <person name="Guzman-Vendrell M."/>
            <person name="Fraisier V."/>
            <person name="Borek W.E."/>
            <person name="Alves F.L."/>
            <person name="Dingli F."/>
            <person name="Loew D."/>
            <person name="Rappsilber J."/>
            <person name="Sawin K.E."/>
            <person name="Martin S.G."/>
            <person name="Paoletti A."/>
        </authorList>
    </citation>
    <scope>FUNCTION</scope>
</reference>
<reference key="21">
    <citation type="journal article" date="2015" name="Mol. Cell. Proteomics">
        <title>Quantitative phosphoproteomics reveals pathways for coordination of cell growth and division by the conserved fission yeast kinase pom1.</title>
        <authorList>
            <person name="Kettenbach A.N."/>
            <person name="Deng L."/>
            <person name="Wu Y."/>
            <person name="Baldissard S."/>
            <person name="Adamo M.E."/>
            <person name="Gerber S.A."/>
            <person name="Moseley J.B."/>
        </authorList>
    </citation>
    <scope>FUNCTION</scope>
    <scope>CATALYTIC ACTIVITY</scope>
</reference>
<reference key="22">
    <citation type="journal article" date="2015" name="Mol. Syst. Biol.">
        <title>Pom1 gradient buffering through intermolecular auto-phosphorylation.</title>
        <authorList>
            <person name="Hersch M."/>
            <person name="Hachet O."/>
            <person name="Dalessi S."/>
            <person name="Ullal P."/>
            <person name="Bhatia P."/>
            <person name="Bergmann S."/>
            <person name="Martin S.G."/>
        </authorList>
    </citation>
    <scope>SUBCELLULAR LOCATION</scope>
    <scope>PHOSPHORYLATION</scope>
</reference>
<organism>
    <name type="scientific">Schizosaccharomyces pombe (strain 972 / ATCC 24843)</name>
    <name type="common">Fission yeast</name>
    <dbReference type="NCBI Taxonomy" id="284812"/>
    <lineage>
        <taxon>Eukaryota</taxon>
        <taxon>Fungi</taxon>
        <taxon>Dikarya</taxon>
        <taxon>Ascomycota</taxon>
        <taxon>Taphrinomycotina</taxon>
        <taxon>Schizosaccharomycetes</taxon>
        <taxon>Schizosaccharomycetales</taxon>
        <taxon>Schizosaccharomycetaceae</taxon>
        <taxon>Schizosaccharomyces</taxon>
    </lineage>
</organism>
<proteinExistence type="evidence at protein level"/>
<evidence type="ECO:0000255" key="1">
    <source>
        <dbReference type="PROSITE-ProRule" id="PRU00159"/>
    </source>
</evidence>
<evidence type="ECO:0000255" key="2">
    <source>
        <dbReference type="PROSITE-ProRule" id="PRU10027"/>
    </source>
</evidence>
<evidence type="ECO:0000256" key="3">
    <source>
        <dbReference type="SAM" id="MobiDB-lite"/>
    </source>
</evidence>
<evidence type="ECO:0000269" key="4">
    <source>
    </source>
</evidence>
<evidence type="ECO:0000269" key="5">
    <source>
    </source>
</evidence>
<evidence type="ECO:0000269" key="6">
    <source>
    </source>
</evidence>
<evidence type="ECO:0000269" key="7">
    <source>
    </source>
</evidence>
<evidence type="ECO:0000269" key="8">
    <source>
    </source>
</evidence>
<evidence type="ECO:0000269" key="9">
    <source>
    </source>
</evidence>
<evidence type="ECO:0000269" key="10">
    <source>
    </source>
</evidence>
<evidence type="ECO:0000269" key="11">
    <source>
    </source>
</evidence>
<evidence type="ECO:0000269" key="12">
    <source>
    </source>
</evidence>
<evidence type="ECO:0000269" key="13">
    <source>
    </source>
</evidence>
<evidence type="ECO:0000269" key="14">
    <source>
    </source>
</evidence>
<evidence type="ECO:0000269" key="15">
    <source>
    </source>
</evidence>
<evidence type="ECO:0000269" key="16">
    <source>
    </source>
</evidence>
<evidence type="ECO:0000269" key="17">
    <source>
    </source>
</evidence>
<evidence type="ECO:0000269" key="18">
    <source>
    </source>
</evidence>
<evidence type="ECO:0000269" key="19">
    <source>
    </source>
</evidence>
<evidence type="ECO:0000269" key="20">
    <source>
    </source>
</evidence>
<evidence type="ECO:0000269" key="21">
    <source>
    </source>
</evidence>
<evidence type="ECO:0000269" key="22">
    <source>
    </source>
</evidence>
<evidence type="ECO:0000269" key="23">
    <source>
    </source>
</evidence>
<evidence type="ECO:0000269" key="24">
    <source>
    </source>
</evidence>
<evidence type="ECO:0000303" key="25">
    <source>
    </source>
</evidence>
<evidence type="ECO:0000305" key="26"/>
<protein>
    <recommendedName>
        <fullName>DYRK-family kinase pom1</fullName>
        <ecNumber evidence="14 20 22">2.7.12.1</ecNumber>
    </recommendedName>
</protein>